<accession>P0C2F4</accession>
<reference key="1">
    <citation type="journal article" date="2007" name="Toxicon">
        <title>Purification and characterization of Heteroscorpine-1 (HS-1) toxin from Heterometrus laoticus scorpion venom.</title>
        <authorList>
            <person name="Uawonggul N."/>
            <person name="Thammasirirak S."/>
            <person name="Chaveerach A."/>
            <person name="Arkaravichien T."/>
            <person name="Bunyatratchata W."/>
            <person name="Ruangjirachuporn W."/>
            <person name="Jearranaiprepame P."/>
            <person name="Nakamura T."/>
            <person name="Matsuda M."/>
            <person name="Kobayashi M."/>
            <person name="Hattori S."/>
            <person name="Daduang S."/>
        </authorList>
    </citation>
    <scope>NUCLEOTIDE SEQUENCE [GENOMIC DNA]</scope>
    <scope>PROTEIN SEQUENCE OF 20; 58-71 AND 80-86</scope>
    <scope>FUNCTION</scope>
    <scope>MASS SPECTROMETRY</scope>
    <scope>TOXIC DOSE</scope>
    <scope>SUBCELLULAR LOCATION</scope>
    <source>
        <tissue>Venom</tissue>
    </source>
</reference>
<evidence type="ECO:0000255" key="1">
    <source>
        <dbReference type="PROSITE-ProRule" id="PRU01209"/>
    </source>
</evidence>
<evidence type="ECO:0000269" key="2">
    <source>
    </source>
</evidence>
<evidence type="ECO:0000303" key="3">
    <source>
    </source>
</evidence>
<evidence type="ECO:0000305" key="4"/>
<evidence type="ECO:0000305" key="5">
    <source>
    </source>
</evidence>
<dbReference type="SMR" id="P0C2F4"/>
<dbReference type="GO" id="GO:0005576">
    <property type="term" value="C:extracellular region"/>
    <property type="evidence" value="ECO:0007669"/>
    <property type="project" value="UniProtKB-SubCell"/>
</dbReference>
<dbReference type="GO" id="GO:0090729">
    <property type="term" value="F:toxin activity"/>
    <property type="evidence" value="ECO:0007669"/>
    <property type="project" value="UniProtKB-KW"/>
</dbReference>
<dbReference type="GO" id="GO:0042742">
    <property type="term" value="P:defense response to bacterium"/>
    <property type="evidence" value="ECO:0007669"/>
    <property type="project" value="UniProtKB-KW"/>
</dbReference>
<dbReference type="InterPro" id="IPR029237">
    <property type="entry name" value="Long_scorpion_toxin_alpha/beta"/>
</dbReference>
<dbReference type="Pfam" id="PF14866">
    <property type="entry name" value="Scorpion_toxin_alpha-beta"/>
    <property type="match status" value="1"/>
</dbReference>
<dbReference type="PROSITE" id="PS51862">
    <property type="entry name" value="BSPN_CSAB"/>
    <property type="match status" value="1"/>
</dbReference>
<feature type="signal peptide" evidence="2">
    <location>
        <begin position="1"/>
        <end position="19"/>
    </location>
</feature>
<feature type="chain" id="PRO_0000274680" description="Heteroscorpine-1" evidence="5">
    <location>
        <begin position="20"/>
        <end position="95"/>
    </location>
</feature>
<feature type="domain" description="BetaSPN-type CS-alpha/beta" evidence="1">
    <location>
        <begin position="55"/>
        <end position="95"/>
    </location>
</feature>
<feature type="disulfide bond" evidence="1">
    <location>
        <begin position="58"/>
        <end position="82"/>
    </location>
</feature>
<feature type="disulfide bond" evidence="1">
    <location>
        <begin position="68"/>
        <end position="87"/>
    </location>
</feature>
<feature type="disulfide bond" evidence="1">
    <location>
        <begin position="72"/>
        <end position="89"/>
    </location>
</feature>
<keyword id="KW-0044">Antibiotic</keyword>
<keyword id="KW-0929">Antimicrobial</keyword>
<keyword id="KW-0903">Direct protein sequencing</keyword>
<keyword id="KW-1015">Disulfide bond</keyword>
<keyword id="KW-0964">Secreted</keyword>
<keyword id="KW-0732">Signal</keyword>
<keyword id="KW-0800">Toxin</keyword>
<comment type="function">
    <text evidence="2">Has antibacterial activity against B.subtilis, K.pneumoniae and P.aeruginosa.</text>
</comment>
<comment type="subcellular location">
    <subcellularLocation>
        <location evidence="2">Secreted</location>
    </subcellularLocation>
</comment>
<comment type="tissue specificity">
    <text evidence="5">Expressed by the venom gland.</text>
</comment>
<comment type="PTM">
    <text evidence="2">Contains 3 disulfide bonds.</text>
</comment>
<comment type="mass spectrometry"/>
<comment type="toxic dose">
    <text evidence="2">PD(50) is 80 ul to crickets (Gryllus sp).</text>
</comment>
<comment type="similarity">
    <text evidence="4">Belongs to the long chain scorpion toxin family. Class 3 subfamily.</text>
</comment>
<name>KBX3_HETLA</name>
<sequence>MNSKLTALIFLGLVAIASCGWINEEKIQKKIDEKIGNNILGGMAKAVVHKLAKGEFQCVANIDTMGNCETHCQKTSGEKGFCHGTKCKCGKPLSY</sequence>
<proteinExistence type="evidence at protein level"/>
<organism>
    <name type="scientific">Heterometrus laoticus</name>
    <name type="common">Thai giant scorpion</name>
    <dbReference type="NCBI Taxonomy" id="217256"/>
    <lineage>
        <taxon>Eukaryota</taxon>
        <taxon>Metazoa</taxon>
        <taxon>Ecdysozoa</taxon>
        <taxon>Arthropoda</taxon>
        <taxon>Chelicerata</taxon>
        <taxon>Arachnida</taxon>
        <taxon>Scorpiones</taxon>
        <taxon>Iurida</taxon>
        <taxon>Scorpionoidea</taxon>
        <taxon>Scorpionidae</taxon>
        <taxon>Heterometrinae</taxon>
        <taxon>Heterometrus</taxon>
    </lineage>
</organism>
<protein>
    <recommendedName>
        <fullName evidence="3">Heteroscorpine-1</fullName>
        <shortName evidence="3">HS-1</shortName>
    </recommendedName>
</protein>